<dbReference type="EC" id="3.5.1.5" evidence="1"/>
<dbReference type="EMBL" id="AF056189">
    <property type="protein sequence ID" value="AAC61501.1"/>
    <property type="molecule type" value="Genomic_DNA"/>
</dbReference>
<dbReference type="RefSeq" id="WP_006042763.1">
    <property type="nucleotide sequence ID" value="NZ_CH724168.1"/>
</dbReference>
<dbReference type="SMR" id="O87401"/>
<dbReference type="STRING" id="59931.WH7805_09814"/>
<dbReference type="eggNOG" id="COG0832">
    <property type="taxonomic scope" value="Bacteria"/>
</dbReference>
<dbReference type="OrthoDB" id="9797217at2"/>
<dbReference type="PhylomeDB" id="O87401"/>
<dbReference type="UniPathway" id="UPA00258">
    <property type="reaction ID" value="UER00370"/>
</dbReference>
<dbReference type="GO" id="GO:0035550">
    <property type="term" value="C:urease complex"/>
    <property type="evidence" value="ECO:0007669"/>
    <property type="project" value="InterPro"/>
</dbReference>
<dbReference type="GO" id="GO:0009039">
    <property type="term" value="F:urease activity"/>
    <property type="evidence" value="ECO:0007669"/>
    <property type="project" value="UniProtKB-UniRule"/>
</dbReference>
<dbReference type="GO" id="GO:0043419">
    <property type="term" value="P:urea catabolic process"/>
    <property type="evidence" value="ECO:0007669"/>
    <property type="project" value="UniProtKB-UniRule"/>
</dbReference>
<dbReference type="CDD" id="cd00407">
    <property type="entry name" value="Urease_beta"/>
    <property type="match status" value="1"/>
</dbReference>
<dbReference type="FunFam" id="2.10.150.10:FF:000001">
    <property type="entry name" value="Urease subunit beta"/>
    <property type="match status" value="1"/>
</dbReference>
<dbReference type="Gene3D" id="2.10.150.10">
    <property type="entry name" value="Urease, beta subunit"/>
    <property type="match status" value="1"/>
</dbReference>
<dbReference type="HAMAP" id="MF_01954">
    <property type="entry name" value="Urease_beta"/>
    <property type="match status" value="1"/>
</dbReference>
<dbReference type="InterPro" id="IPR002019">
    <property type="entry name" value="Urease_beta-like"/>
</dbReference>
<dbReference type="InterPro" id="IPR036461">
    <property type="entry name" value="Urease_betasu_sf"/>
</dbReference>
<dbReference type="InterPro" id="IPR050069">
    <property type="entry name" value="Urease_subunit"/>
</dbReference>
<dbReference type="NCBIfam" id="NF009682">
    <property type="entry name" value="PRK13203.1"/>
    <property type="match status" value="1"/>
</dbReference>
<dbReference type="NCBIfam" id="TIGR00192">
    <property type="entry name" value="urease_beta"/>
    <property type="match status" value="1"/>
</dbReference>
<dbReference type="PANTHER" id="PTHR33569">
    <property type="entry name" value="UREASE"/>
    <property type="match status" value="1"/>
</dbReference>
<dbReference type="PANTHER" id="PTHR33569:SF1">
    <property type="entry name" value="UREASE"/>
    <property type="match status" value="1"/>
</dbReference>
<dbReference type="Pfam" id="PF00699">
    <property type="entry name" value="Urease_beta"/>
    <property type="match status" value="1"/>
</dbReference>
<dbReference type="SUPFAM" id="SSF51278">
    <property type="entry name" value="Urease, beta-subunit"/>
    <property type="match status" value="1"/>
</dbReference>
<name>URE2_SYNPV</name>
<protein>
    <recommendedName>
        <fullName evidence="1">Urease subunit beta</fullName>
        <ecNumber evidence="1">3.5.1.5</ecNumber>
    </recommendedName>
    <alternativeName>
        <fullName evidence="1">Urea amidohydrolase subunit beta</fullName>
    </alternativeName>
</protein>
<comment type="catalytic activity">
    <reaction evidence="1 2">
        <text>urea + 2 H2O + H(+) = hydrogencarbonate + 2 NH4(+)</text>
        <dbReference type="Rhea" id="RHEA:20557"/>
        <dbReference type="ChEBI" id="CHEBI:15377"/>
        <dbReference type="ChEBI" id="CHEBI:15378"/>
        <dbReference type="ChEBI" id="CHEBI:16199"/>
        <dbReference type="ChEBI" id="CHEBI:17544"/>
        <dbReference type="ChEBI" id="CHEBI:28938"/>
        <dbReference type="EC" id="3.5.1.5"/>
    </reaction>
</comment>
<comment type="biophysicochemical properties">
    <kinetics>
        <KM evidence="2">0.232 mM for urea</KM>
        <Vmax evidence="2">0.0013 mmol/min/mg enzyme</Vmax>
    </kinetics>
    <phDependence>
        <text evidence="2">Optimum pH is 8.6.</text>
    </phDependence>
    <temperatureDependence>
        <text evidence="2">Optimum temperature is 45 degrees Celsius.</text>
    </temperatureDependence>
</comment>
<comment type="pathway">
    <text evidence="1">Nitrogen metabolism; urea degradation; CO(2) and NH(3) from urea (urease route): step 1/1.</text>
</comment>
<comment type="subunit">
    <text evidence="1">Heterotrimer of UreA (gamma), UreB (beta) and UreC (alpha) subunits. Three heterotrimers associate to form the active enzyme.</text>
</comment>
<comment type="subcellular location">
    <subcellularLocation>
        <location evidence="1">Cytoplasm</location>
    </subcellularLocation>
</comment>
<comment type="similarity">
    <text evidence="1">Belongs to the urease beta subunit family.</text>
</comment>
<accession>O87401</accession>
<evidence type="ECO:0000255" key="1">
    <source>
        <dbReference type="HAMAP-Rule" id="MF_01954"/>
    </source>
</evidence>
<evidence type="ECO:0000269" key="2">
    <source>
    </source>
</evidence>
<gene>
    <name evidence="1" type="primary">ureB</name>
</gene>
<sequence length="106" mass="11298">MAPFIPGELLPEPGEIELNAGRPVTSLHVANSGDRPVQVGSHFHFAEANAALQFDRTAARGQRLDIPAGTAIRFEPGDSRDVNLIPFAGDRRVIGFNGQINGPLDA</sequence>
<proteinExistence type="evidence at protein level"/>
<reference key="1">
    <citation type="journal article" date="1999" name="Microbiology">
        <title>The marine cyanobacterium Synechococcus sp. WH7805 requires urease (urea amidohydrolase, EC 3.5.1.5) to utilize urea as a nitrogen source: molecular-genetic and biochemical analysis of the enzyme.</title>
        <authorList>
            <person name="Collier J.L."/>
            <person name="Brahamsha B."/>
            <person name="Palenik B."/>
        </authorList>
    </citation>
    <scope>NUCLEOTIDE SEQUENCE [GENOMIC DNA]</scope>
    <scope>CATALYTIC ACTIVITY</scope>
    <scope>BIOPHYSICOCHEMICAL PROPERTIES</scope>
</reference>
<feature type="chain" id="PRO_0000234280" description="Urease subunit beta">
    <location>
        <begin position="1"/>
        <end position="106"/>
    </location>
</feature>
<organism>
    <name type="scientific">Synechococcus sp. (strain WH7805)</name>
    <dbReference type="NCBI Taxonomy" id="59931"/>
    <lineage>
        <taxon>Bacteria</taxon>
        <taxon>Bacillati</taxon>
        <taxon>Cyanobacteriota</taxon>
        <taxon>Cyanophyceae</taxon>
        <taxon>Synechococcales</taxon>
        <taxon>Synechococcaceae</taxon>
        <taxon>Synechococcus</taxon>
    </lineage>
</organism>
<keyword id="KW-0963">Cytoplasm</keyword>
<keyword id="KW-0378">Hydrolase</keyword>